<evidence type="ECO:0000255" key="1">
    <source>
        <dbReference type="HAMAP-Rule" id="MF_01318"/>
    </source>
</evidence>
<evidence type="ECO:0000305" key="2"/>
<feature type="chain" id="PRO_0000125736" description="Large ribosomal subunit protein uL1">
    <location>
        <begin position="1"/>
        <end position="230"/>
    </location>
</feature>
<name>RL1_STAAN</name>
<comment type="function">
    <text evidence="1">Binds directly to 23S rRNA. The L1 stalk is quite mobile in the ribosome, and is involved in E site tRNA release.</text>
</comment>
<comment type="function">
    <text evidence="1">Protein L1 is also a translational repressor protein, it controls the translation of the L11 operon by binding to its mRNA.</text>
</comment>
<comment type="subunit">
    <text evidence="1">Part of the 50S ribosomal subunit.</text>
</comment>
<comment type="similarity">
    <text evidence="1">Belongs to the universal ribosomal protein uL1 family.</text>
</comment>
<keyword id="KW-0678">Repressor</keyword>
<keyword id="KW-0687">Ribonucleoprotein</keyword>
<keyword id="KW-0689">Ribosomal protein</keyword>
<keyword id="KW-0694">RNA-binding</keyword>
<keyword id="KW-0699">rRNA-binding</keyword>
<keyword id="KW-0810">Translation regulation</keyword>
<keyword id="KW-0820">tRNA-binding</keyword>
<protein>
    <recommendedName>
        <fullName evidence="1">Large ribosomal subunit protein uL1</fullName>
    </recommendedName>
    <alternativeName>
        <fullName evidence="2">50S ribosomal protein L1</fullName>
    </alternativeName>
</protein>
<reference key="1">
    <citation type="journal article" date="2001" name="Lancet">
        <title>Whole genome sequencing of meticillin-resistant Staphylococcus aureus.</title>
        <authorList>
            <person name="Kuroda M."/>
            <person name="Ohta T."/>
            <person name="Uchiyama I."/>
            <person name="Baba T."/>
            <person name="Yuzawa H."/>
            <person name="Kobayashi I."/>
            <person name="Cui L."/>
            <person name="Oguchi A."/>
            <person name="Aoki K."/>
            <person name="Nagai Y."/>
            <person name="Lian J.-Q."/>
            <person name="Ito T."/>
            <person name="Kanamori M."/>
            <person name="Matsumaru H."/>
            <person name="Maruyama A."/>
            <person name="Murakami H."/>
            <person name="Hosoyama A."/>
            <person name="Mizutani-Ui Y."/>
            <person name="Takahashi N.K."/>
            <person name="Sawano T."/>
            <person name="Inoue R."/>
            <person name="Kaito C."/>
            <person name="Sekimizu K."/>
            <person name="Hirakawa H."/>
            <person name="Kuhara S."/>
            <person name="Goto S."/>
            <person name="Yabuzaki J."/>
            <person name="Kanehisa M."/>
            <person name="Yamashita A."/>
            <person name="Oshima K."/>
            <person name="Furuya K."/>
            <person name="Yoshino C."/>
            <person name="Shiba T."/>
            <person name="Hattori M."/>
            <person name="Ogasawara N."/>
            <person name="Hayashi H."/>
            <person name="Hiramatsu K."/>
        </authorList>
    </citation>
    <scope>NUCLEOTIDE SEQUENCE [LARGE SCALE GENOMIC DNA]</scope>
    <source>
        <strain>N315</strain>
    </source>
</reference>
<reference key="2">
    <citation type="submission" date="2005-11" db="UniProtKB">
        <title>Shotgun proteomic analysis of total protein extract of S. aureus S30 versus N315.</title>
        <authorList>
            <person name="Stenz L."/>
        </authorList>
    </citation>
    <scope>IDENTIFICATION BY MASS SPECTROMETRY</scope>
</reference>
<reference key="3">
    <citation type="submission" date="2007-10" db="UniProtKB">
        <title>Shotgun proteomic analysis of total and membrane protein extracts of S. aureus strain N315.</title>
        <authorList>
            <person name="Vaezzadeh A.R."/>
            <person name="Deshusses J."/>
            <person name="Lescuyer P."/>
            <person name="Hochstrasser D.F."/>
        </authorList>
    </citation>
    <scope>IDENTIFICATION BY MASS SPECTROMETRY [LARGE SCALE ANALYSIS]</scope>
    <source>
        <strain>N315</strain>
    </source>
</reference>
<organism>
    <name type="scientific">Staphylococcus aureus (strain N315)</name>
    <dbReference type="NCBI Taxonomy" id="158879"/>
    <lineage>
        <taxon>Bacteria</taxon>
        <taxon>Bacillati</taxon>
        <taxon>Bacillota</taxon>
        <taxon>Bacilli</taxon>
        <taxon>Bacillales</taxon>
        <taxon>Staphylococcaceae</taxon>
        <taxon>Staphylococcus</taxon>
    </lineage>
</organism>
<proteinExistence type="evidence at protein level"/>
<dbReference type="EMBL" id="BA000018">
    <property type="protein sequence ID" value="BAB41727.1"/>
    <property type="molecule type" value="Genomic_DNA"/>
</dbReference>
<dbReference type="PIR" id="D89821">
    <property type="entry name" value="D89821"/>
</dbReference>
<dbReference type="RefSeq" id="WP_001074622.1">
    <property type="nucleotide sequence ID" value="NC_002745.2"/>
</dbReference>
<dbReference type="SMR" id="Q99W68"/>
<dbReference type="EnsemblBacteria" id="BAB41727">
    <property type="protein sequence ID" value="BAB41727"/>
    <property type="gene ID" value="BAB41727"/>
</dbReference>
<dbReference type="KEGG" id="sau:SA0496"/>
<dbReference type="HOGENOM" id="CLU_062853_0_0_9"/>
<dbReference type="GO" id="GO:0015934">
    <property type="term" value="C:large ribosomal subunit"/>
    <property type="evidence" value="ECO:0007669"/>
    <property type="project" value="InterPro"/>
</dbReference>
<dbReference type="GO" id="GO:0019843">
    <property type="term" value="F:rRNA binding"/>
    <property type="evidence" value="ECO:0007669"/>
    <property type="project" value="UniProtKB-UniRule"/>
</dbReference>
<dbReference type="GO" id="GO:0003735">
    <property type="term" value="F:structural constituent of ribosome"/>
    <property type="evidence" value="ECO:0007669"/>
    <property type="project" value="InterPro"/>
</dbReference>
<dbReference type="GO" id="GO:0000049">
    <property type="term" value="F:tRNA binding"/>
    <property type="evidence" value="ECO:0007669"/>
    <property type="project" value="UniProtKB-KW"/>
</dbReference>
<dbReference type="GO" id="GO:0006417">
    <property type="term" value="P:regulation of translation"/>
    <property type="evidence" value="ECO:0007669"/>
    <property type="project" value="UniProtKB-KW"/>
</dbReference>
<dbReference type="GO" id="GO:0006412">
    <property type="term" value="P:translation"/>
    <property type="evidence" value="ECO:0007669"/>
    <property type="project" value="UniProtKB-UniRule"/>
</dbReference>
<dbReference type="CDD" id="cd00403">
    <property type="entry name" value="Ribosomal_L1"/>
    <property type="match status" value="1"/>
</dbReference>
<dbReference type="FunFam" id="3.40.50.790:FF:000001">
    <property type="entry name" value="50S ribosomal protein L1"/>
    <property type="match status" value="1"/>
</dbReference>
<dbReference type="Gene3D" id="3.30.190.20">
    <property type="match status" value="1"/>
</dbReference>
<dbReference type="Gene3D" id="3.40.50.790">
    <property type="match status" value="1"/>
</dbReference>
<dbReference type="HAMAP" id="MF_01318_B">
    <property type="entry name" value="Ribosomal_uL1_B"/>
    <property type="match status" value="1"/>
</dbReference>
<dbReference type="InterPro" id="IPR005878">
    <property type="entry name" value="Ribosom_uL1_bac-type"/>
</dbReference>
<dbReference type="InterPro" id="IPR002143">
    <property type="entry name" value="Ribosomal_uL1"/>
</dbReference>
<dbReference type="InterPro" id="IPR023674">
    <property type="entry name" value="Ribosomal_uL1-like"/>
</dbReference>
<dbReference type="InterPro" id="IPR028364">
    <property type="entry name" value="Ribosomal_uL1/biogenesis"/>
</dbReference>
<dbReference type="InterPro" id="IPR016095">
    <property type="entry name" value="Ribosomal_uL1_3-a/b-sand"/>
</dbReference>
<dbReference type="InterPro" id="IPR023673">
    <property type="entry name" value="Ribosomal_uL1_CS"/>
</dbReference>
<dbReference type="NCBIfam" id="TIGR01169">
    <property type="entry name" value="rplA_bact"/>
    <property type="match status" value="1"/>
</dbReference>
<dbReference type="PANTHER" id="PTHR36427">
    <property type="entry name" value="54S RIBOSOMAL PROTEIN L1, MITOCHONDRIAL"/>
    <property type="match status" value="1"/>
</dbReference>
<dbReference type="PANTHER" id="PTHR36427:SF3">
    <property type="entry name" value="LARGE RIBOSOMAL SUBUNIT PROTEIN UL1M"/>
    <property type="match status" value="1"/>
</dbReference>
<dbReference type="Pfam" id="PF00687">
    <property type="entry name" value="Ribosomal_L1"/>
    <property type="match status" value="1"/>
</dbReference>
<dbReference type="PIRSF" id="PIRSF002155">
    <property type="entry name" value="Ribosomal_L1"/>
    <property type="match status" value="1"/>
</dbReference>
<dbReference type="SUPFAM" id="SSF56808">
    <property type="entry name" value="Ribosomal protein L1"/>
    <property type="match status" value="1"/>
</dbReference>
<dbReference type="PROSITE" id="PS01199">
    <property type="entry name" value="RIBOSOMAL_L1"/>
    <property type="match status" value="1"/>
</dbReference>
<gene>
    <name evidence="1" type="primary">rplA</name>
    <name type="ordered locus">SA0496</name>
</gene>
<sequence length="230" mass="24738">MAKKGKKYQEAASKVDRTQHYSVEEAIKLAKETSIANFDASVEVAFRLGIDTRKNDQQIRGAVVLPNGTGKSQSVLVFAKGDKIAEAEAAGTDYVGEAEYVQKIQQGWFDFDVVVATPDMMGEVGKLGRVLGPKGLMPNPKTGTVTMDVKKAVEEIKAGKVEYRAEKAGIVHASIGKVSFTDEQLIENFNTLQDVLAKAKPSSAKGTYFKSVAVTTTMGPGVKIDTASFK</sequence>
<accession>Q99W68</accession>